<proteinExistence type="inferred from homology"/>
<reference key="1">
    <citation type="journal article" date="2007" name="Genome Res.">
        <title>Genome characteristics of facultatively symbiotic Frankia sp. strains reflect host range and host plant biogeography.</title>
        <authorList>
            <person name="Normand P."/>
            <person name="Lapierre P."/>
            <person name="Tisa L.S."/>
            <person name="Gogarten J.P."/>
            <person name="Alloisio N."/>
            <person name="Bagnarol E."/>
            <person name="Bassi C.A."/>
            <person name="Berry A.M."/>
            <person name="Bickhart D.M."/>
            <person name="Choisne N."/>
            <person name="Couloux A."/>
            <person name="Cournoyer B."/>
            <person name="Cruveiller S."/>
            <person name="Daubin V."/>
            <person name="Demange N."/>
            <person name="Francino M.P."/>
            <person name="Goltsman E."/>
            <person name="Huang Y."/>
            <person name="Kopp O.R."/>
            <person name="Labarre L."/>
            <person name="Lapidus A."/>
            <person name="Lavire C."/>
            <person name="Marechal J."/>
            <person name="Martinez M."/>
            <person name="Mastronunzio J.E."/>
            <person name="Mullin B.C."/>
            <person name="Niemann J."/>
            <person name="Pujic P."/>
            <person name="Rawnsley T."/>
            <person name="Rouy Z."/>
            <person name="Schenowitz C."/>
            <person name="Sellstedt A."/>
            <person name="Tavares F."/>
            <person name="Tomkins J.P."/>
            <person name="Vallenet D."/>
            <person name="Valverde C."/>
            <person name="Wall L.G."/>
            <person name="Wang Y."/>
            <person name="Medigue C."/>
            <person name="Benson D.R."/>
        </authorList>
    </citation>
    <scope>NUCLEOTIDE SEQUENCE [LARGE SCALE GENOMIC DNA]</scope>
    <source>
        <strain>DSM 45818 / CECT 9043 / HFP020203 / CcI3</strain>
    </source>
</reference>
<evidence type="ECO:0000255" key="1">
    <source>
        <dbReference type="HAMAP-Rule" id="MF_00444"/>
    </source>
</evidence>
<evidence type="ECO:0000305" key="2"/>
<gene>
    <name evidence="1" type="primary">clpP2</name>
    <name type="ordered locus">Francci3_1206</name>
</gene>
<name>CLPP2_FRACC</name>
<organism>
    <name type="scientific">Frankia casuarinae (strain DSM 45818 / CECT 9043 / HFP020203 / CcI3)</name>
    <dbReference type="NCBI Taxonomy" id="106370"/>
    <lineage>
        <taxon>Bacteria</taxon>
        <taxon>Bacillati</taxon>
        <taxon>Actinomycetota</taxon>
        <taxon>Actinomycetes</taxon>
        <taxon>Frankiales</taxon>
        <taxon>Frankiaceae</taxon>
        <taxon>Frankia</taxon>
    </lineage>
</organism>
<accession>Q2JDQ8</accession>
<protein>
    <recommendedName>
        <fullName evidence="1">ATP-dependent Clp protease proteolytic subunit 2</fullName>
        <ecNumber evidence="1">3.4.21.92</ecNumber>
    </recommendedName>
    <alternativeName>
        <fullName evidence="1">Endopeptidase Clp 2</fullName>
    </alternativeName>
</protein>
<comment type="function">
    <text evidence="1">Cleaves peptides in various proteins in a process that requires ATP hydrolysis. Has a chymotrypsin-like activity. Plays a major role in the degradation of misfolded proteins.</text>
</comment>
<comment type="catalytic activity">
    <reaction evidence="1">
        <text>Hydrolysis of proteins to small peptides in the presence of ATP and magnesium. alpha-casein is the usual test substrate. In the absence of ATP, only oligopeptides shorter than five residues are hydrolyzed (such as succinyl-Leu-Tyr-|-NHMec, and Leu-Tyr-Leu-|-Tyr-Trp, in which cleavage of the -Tyr-|-Leu- and -Tyr-|-Trp bonds also occurs).</text>
        <dbReference type="EC" id="3.4.21.92"/>
    </reaction>
</comment>
<comment type="subunit">
    <text evidence="1">Fourteen ClpP subunits assemble into 2 heptameric rings which stack back to back to give a disk-like structure with a central cavity, resembling the structure of eukaryotic proteasomes.</text>
</comment>
<comment type="subcellular location">
    <subcellularLocation>
        <location evidence="1">Cytoplasm</location>
    </subcellularLocation>
</comment>
<comment type="similarity">
    <text evidence="1">Belongs to the peptidase S14 family.</text>
</comment>
<comment type="sequence caution" evidence="2">
    <conflict type="erroneous initiation">
        <sequence resource="EMBL-CDS" id="ABD10584"/>
    </conflict>
</comment>
<feature type="chain" id="PRO_0000236388" description="ATP-dependent Clp protease proteolytic subunit 2">
    <location>
        <begin position="1"/>
        <end position="217"/>
    </location>
</feature>
<feature type="active site" description="Nucleophile" evidence="1">
    <location>
        <position position="113"/>
    </location>
</feature>
<feature type="active site" evidence="1">
    <location>
        <position position="138"/>
    </location>
</feature>
<keyword id="KW-0963">Cytoplasm</keyword>
<keyword id="KW-0378">Hydrolase</keyword>
<keyword id="KW-0645">Protease</keyword>
<keyword id="KW-1185">Reference proteome</keyword>
<keyword id="KW-0720">Serine protease</keyword>
<dbReference type="EC" id="3.4.21.92" evidence="1"/>
<dbReference type="EMBL" id="CP000249">
    <property type="protein sequence ID" value="ABD10584.1"/>
    <property type="status" value="ALT_INIT"/>
    <property type="molecule type" value="Genomic_DNA"/>
</dbReference>
<dbReference type="SMR" id="Q2JDQ8"/>
<dbReference type="STRING" id="106370.Francci3_1206"/>
<dbReference type="MEROPS" id="S14.009"/>
<dbReference type="KEGG" id="fra:Francci3_1206"/>
<dbReference type="eggNOG" id="COG0740">
    <property type="taxonomic scope" value="Bacteria"/>
</dbReference>
<dbReference type="HOGENOM" id="CLU_058707_3_2_11"/>
<dbReference type="PhylomeDB" id="Q2JDQ8"/>
<dbReference type="Proteomes" id="UP000001937">
    <property type="component" value="Chromosome"/>
</dbReference>
<dbReference type="GO" id="GO:0005737">
    <property type="term" value="C:cytoplasm"/>
    <property type="evidence" value="ECO:0007669"/>
    <property type="project" value="UniProtKB-SubCell"/>
</dbReference>
<dbReference type="GO" id="GO:0009368">
    <property type="term" value="C:endopeptidase Clp complex"/>
    <property type="evidence" value="ECO:0007669"/>
    <property type="project" value="TreeGrafter"/>
</dbReference>
<dbReference type="GO" id="GO:0004176">
    <property type="term" value="F:ATP-dependent peptidase activity"/>
    <property type="evidence" value="ECO:0007669"/>
    <property type="project" value="InterPro"/>
</dbReference>
<dbReference type="GO" id="GO:0051117">
    <property type="term" value="F:ATPase binding"/>
    <property type="evidence" value="ECO:0007669"/>
    <property type="project" value="TreeGrafter"/>
</dbReference>
<dbReference type="GO" id="GO:0004252">
    <property type="term" value="F:serine-type endopeptidase activity"/>
    <property type="evidence" value="ECO:0007669"/>
    <property type="project" value="UniProtKB-UniRule"/>
</dbReference>
<dbReference type="GO" id="GO:0006515">
    <property type="term" value="P:protein quality control for misfolded or incompletely synthesized proteins"/>
    <property type="evidence" value="ECO:0007669"/>
    <property type="project" value="TreeGrafter"/>
</dbReference>
<dbReference type="CDD" id="cd07017">
    <property type="entry name" value="S14_ClpP_2"/>
    <property type="match status" value="1"/>
</dbReference>
<dbReference type="FunFam" id="3.90.226.10:FF:000002">
    <property type="entry name" value="ATP-dependent Clp protease proteolytic subunit"/>
    <property type="match status" value="1"/>
</dbReference>
<dbReference type="Gene3D" id="3.90.226.10">
    <property type="entry name" value="2-enoyl-CoA Hydratase, Chain A, domain 1"/>
    <property type="match status" value="1"/>
</dbReference>
<dbReference type="HAMAP" id="MF_00444">
    <property type="entry name" value="ClpP"/>
    <property type="match status" value="1"/>
</dbReference>
<dbReference type="InterPro" id="IPR001907">
    <property type="entry name" value="ClpP"/>
</dbReference>
<dbReference type="InterPro" id="IPR029045">
    <property type="entry name" value="ClpP/crotonase-like_dom_sf"/>
</dbReference>
<dbReference type="InterPro" id="IPR023562">
    <property type="entry name" value="ClpP/TepA"/>
</dbReference>
<dbReference type="InterPro" id="IPR033135">
    <property type="entry name" value="ClpP_His_AS"/>
</dbReference>
<dbReference type="InterPro" id="IPR018215">
    <property type="entry name" value="ClpP_Ser_AS"/>
</dbReference>
<dbReference type="NCBIfam" id="NF001368">
    <property type="entry name" value="PRK00277.1"/>
    <property type="match status" value="1"/>
</dbReference>
<dbReference type="NCBIfam" id="NF009205">
    <property type="entry name" value="PRK12553.1"/>
    <property type="match status" value="1"/>
</dbReference>
<dbReference type="PANTHER" id="PTHR10381">
    <property type="entry name" value="ATP-DEPENDENT CLP PROTEASE PROTEOLYTIC SUBUNIT"/>
    <property type="match status" value="1"/>
</dbReference>
<dbReference type="PANTHER" id="PTHR10381:SF26">
    <property type="entry name" value="ATP-DEPENDENT CLP PROTEASE PROTEOLYTIC SUBUNIT-LIKE-RELATED"/>
    <property type="match status" value="1"/>
</dbReference>
<dbReference type="Pfam" id="PF00574">
    <property type="entry name" value="CLP_protease"/>
    <property type="match status" value="1"/>
</dbReference>
<dbReference type="PRINTS" id="PR00127">
    <property type="entry name" value="CLPPROTEASEP"/>
</dbReference>
<dbReference type="SUPFAM" id="SSF52096">
    <property type="entry name" value="ClpP/crotonase"/>
    <property type="match status" value="1"/>
</dbReference>
<dbReference type="PROSITE" id="PS00382">
    <property type="entry name" value="CLP_PROTEASE_HIS"/>
    <property type="match status" value="1"/>
</dbReference>
<dbReference type="PROSITE" id="PS00381">
    <property type="entry name" value="CLP_PROTEASE_SER"/>
    <property type="match status" value="1"/>
</dbReference>
<sequence length="217" mass="24202">MRHEQARQAAAQPQGRYVLPNIIEKTSRGEYGMDPYSKLLKERIVFLGVQIDDVSANDVMAQLLFLESEDPDRDISIYINSPGGSFTSLTAIYDTMQFVRPDISTICMGQAASAAAVLLAAGTPGKRFALENSRILIHQPSAQGEGQSSDIEIQAREILRMRSLLERMLAVHTGKKEEDIRKDIERDKIFSADEAKEYGLIDEVIKTRKSSRLATAR</sequence>